<organism>
    <name type="scientific">Salmonella agona (strain SL483)</name>
    <dbReference type="NCBI Taxonomy" id="454166"/>
    <lineage>
        <taxon>Bacteria</taxon>
        <taxon>Pseudomonadati</taxon>
        <taxon>Pseudomonadota</taxon>
        <taxon>Gammaproteobacteria</taxon>
        <taxon>Enterobacterales</taxon>
        <taxon>Enterobacteriaceae</taxon>
        <taxon>Salmonella</taxon>
    </lineage>
</organism>
<proteinExistence type="inferred from homology"/>
<name>PCKA_SALA4</name>
<protein>
    <recommendedName>
        <fullName evidence="1">Phosphoenolpyruvate carboxykinase (ATP)</fullName>
        <shortName evidence="1">PCK</shortName>
        <shortName evidence="1">PEP carboxykinase</shortName>
        <shortName evidence="1">PEPCK</shortName>
        <ecNumber evidence="1">4.1.1.49</ecNumber>
    </recommendedName>
</protein>
<feature type="chain" id="PRO_1000192323" description="Phosphoenolpyruvate carboxykinase (ATP)">
    <location>
        <begin position="1"/>
        <end position="539"/>
    </location>
</feature>
<feature type="binding site" evidence="1">
    <location>
        <position position="64"/>
    </location>
    <ligand>
        <name>substrate</name>
    </ligand>
</feature>
<feature type="binding site" evidence="1">
    <location>
        <position position="206"/>
    </location>
    <ligand>
        <name>substrate</name>
    </ligand>
</feature>
<feature type="binding site" evidence="1">
    <location>
        <position position="212"/>
    </location>
    <ligand>
        <name>ATP</name>
        <dbReference type="ChEBI" id="CHEBI:30616"/>
    </ligand>
</feature>
<feature type="binding site" evidence="1">
    <location>
        <position position="212"/>
    </location>
    <ligand>
        <name>Mn(2+)</name>
        <dbReference type="ChEBI" id="CHEBI:29035"/>
    </ligand>
</feature>
<feature type="binding site" evidence="1">
    <location>
        <position position="212"/>
    </location>
    <ligand>
        <name>substrate</name>
    </ligand>
</feature>
<feature type="binding site" evidence="1">
    <location>
        <position position="231"/>
    </location>
    <ligand>
        <name>ATP</name>
        <dbReference type="ChEBI" id="CHEBI:30616"/>
    </ligand>
</feature>
<feature type="binding site" evidence="1">
    <location>
        <position position="231"/>
    </location>
    <ligand>
        <name>Mn(2+)</name>
        <dbReference type="ChEBI" id="CHEBI:29035"/>
    </ligand>
</feature>
<feature type="binding site" evidence="1">
    <location>
        <begin position="247"/>
        <end position="255"/>
    </location>
    <ligand>
        <name>ATP</name>
        <dbReference type="ChEBI" id="CHEBI:30616"/>
    </ligand>
</feature>
<feature type="binding site" evidence="1">
    <location>
        <position position="268"/>
    </location>
    <ligand>
        <name>Mn(2+)</name>
        <dbReference type="ChEBI" id="CHEBI:29035"/>
    </ligand>
</feature>
<feature type="binding site" evidence="1">
    <location>
        <position position="296"/>
    </location>
    <ligand>
        <name>ATP</name>
        <dbReference type="ChEBI" id="CHEBI:30616"/>
    </ligand>
</feature>
<feature type="binding site" evidence="1">
    <location>
        <position position="332"/>
    </location>
    <ligand>
        <name>ATP</name>
        <dbReference type="ChEBI" id="CHEBI:30616"/>
    </ligand>
</feature>
<feature type="binding site" evidence="1">
    <location>
        <position position="332"/>
    </location>
    <ligand>
        <name>substrate</name>
    </ligand>
</feature>
<feature type="binding site" evidence="1">
    <location>
        <begin position="448"/>
        <end position="449"/>
    </location>
    <ligand>
        <name>ATP</name>
        <dbReference type="ChEBI" id="CHEBI:30616"/>
    </ligand>
</feature>
<feature type="binding site" evidence="1">
    <location>
        <position position="454"/>
    </location>
    <ligand>
        <name>ATP</name>
        <dbReference type="ChEBI" id="CHEBI:30616"/>
    </ligand>
</feature>
<dbReference type="EC" id="4.1.1.49" evidence="1"/>
<dbReference type="EMBL" id="CP001138">
    <property type="protein sequence ID" value="ACH51853.1"/>
    <property type="molecule type" value="Genomic_DNA"/>
</dbReference>
<dbReference type="RefSeq" id="WP_001265689.1">
    <property type="nucleotide sequence ID" value="NC_011149.1"/>
</dbReference>
<dbReference type="SMR" id="B5F8L6"/>
<dbReference type="KEGG" id="sea:SeAg_B3701"/>
<dbReference type="HOGENOM" id="CLU_018247_0_1_6"/>
<dbReference type="UniPathway" id="UPA00138"/>
<dbReference type="Proteomes" id="UP000008819">
    <property type="component" value="Chromosome"/>
</dbReference>
<dbReference type="GO" id="GO:0005829">
    <property type="term" value="C:cytosol"/>
    <property type="evidence" value="ECO:0007669"/>
    <property type="project" value="TreeGrafter"/>
</dbReference>
<dbReference type="GO" id="GO:0005524">
    <property type="term" value="F:ATP binding"/>
    <property type="evidence" value="ECO:0007669"/>
    <property type="project" value="UniProtKB-UniRule"/>
</dbReference>
<dbReference type="GO" id="GO:0046872">
    <property type="term" value="F:metal ion binding"/>
    <property type="evidence" value="ECO:0007669"/>
    <property type="project" value="UniProtKB-KW"/>
</dbReference>
<dbReference type="GO" id="GO:0004612">
    <property type="term" value="F:phosphoenolpyruvate carboxykinase (ATP) activity"/>
    <property type="evidence" value="ECO:0007669"/>
    <property type="project" value="UniProtKB-UniRule"/>
</dbReference>
<dbReference type="GO" id="GO:0006094">
    <property type="term" value="P:gluconeogenesis"/>
    <property type="evidence" value="ECO:0007669"/>
    <property type="project" value="UniProtKB-UniRule"/>
</dbReference>
<dbReference type="CDD" id="cd00484">
    <property type="entry name" value="PEPCK_ATP"/>
    <property type="match status" value="1"/>
</dbReference>
<dbReference type="FunFam" id="2.170.8.10:FF:000001">
    <property type="entry name" value="Phosphoenolpyruvate carboxykinase (ATP)"/>
    <property type="match status" value="1"/>
</dbReference>
<dbReference type="FunFam" id="3.40.449.10:FF:000001">
    <property type="entry name" value="Phosphoenolpyruvate carboxykinase (ATP)"/>
    <property type="match status" value="1"/>
</dbReference>
<dbReference type="Gene3D" id="3.90.228.20">
    <property type="match status" value="1"/>
</dbReference>
<dbReference type="Gene3D" id="3.40.449.10">
    <property type="entry name" value="Phosphoenolpyruvate Carboxykinase, domain 1"/>
    <property type="match status" value="1"/>
</dbReference>
<dbReference type="Gene3D" id="2.170.8.10">
    <property type="entry name" value="Phosphoenolpyruvate Carboxykinase, domain 2"/>
    <property type="match status" value="1"/>
</dbReference>
<dbReference type="HAMAP" id="MF_00453">
    <property type="entry name" value="PEPCK_ATP"/>
    <property type="match status" value="1"/>
</dbReference>
<dbReference type="InterPro" id="IPR001272">
    <property type="entry name" value="PEP_carboxykinase_ATP"/>
</dbReference>
<dbReference type="InterPro" id="IPR013035">
    <property type="entry name" value="PEP_carboxykinase_C"/>
</dbReference>
<dbReference type="InterPro" id="IPR008210">
    <property type="entry name" value="PEP_carboxykinase_N"/>
</dbReference>
<dbReference type="InterPro" id="IPR015994">
    <property type="entry name" value="PEPCK_ATP_CS"/>
</dbReference>
<dbReference type="NCBIfam" id="TIGR00224">
    <property type="entry name" value="pckA"/>
    <property type="match status" value="1"/>
</dbReference>
<dbReference type="NCBIfam" id="NF006819">
    <property type="entry name" value="PRK09344.1-1"/>
    <property type="match status" value="1"/>
</dbReference>
<dbReference type="NCBIfam" id="NF006820">
    <property type="entry name" value="PRK09344.1-2"/>
    <property type="match status" value="1"/>
</dbReference>
<dbReference type="NCBIfam" id="NF006821">
    <property type="entry name" value="PRK09344.1-3"/>
    <property type="match status" value="1"/>
</dbReference>
<dbReference type="PANTHER" id="PTHR30031:SF0">
    <property type="entry name" value="PHOSPHOENOLPYRUVATE CARBOXYKINASE (ATP)"/>
    <property type="match status" value="1"/>
</dbReference>
<dbReference type="PANTHER" id="PTHR30031">
    <property type="entry name" value="PHOSPHOENOLPYRUVATE CARBOXYKINASE ATP"/>
    <property type="match status" value="1"/>
</dbReference>
<dbReference type="Pfam" id="PF01293">
    <property type="entry name" value="PEPCK_ATP"/>
    <property type="match status" value="1"/>
</dbReference>
<dbReference type="PIRSF" id="PIRSF006294">
    <property type="entry name" value="PEP_crbxkin"/>
    <property type="match status" value="1"/>
</dbReference>
<dbReference type="SUPFAM" id="SSF68923">
    <property type="entry name" value="PEP carboxykinase N-terminal domain"/>
    <property type="match status" value="1"/>
</dbReference>
<dbReference type="SUPFAM" id="SSF53795">
    <property type="entry name" value="PEP carboxykinase-like"/>
    <property type="match status" value="1"/>
</dbReference>
<dbReference type="PROSITE" id="PS00532">
    <property type="entry name" value="PEPCK_ATP"/>
    <property type="match status" value="1"/>
</dbReference>
<reference key="1">
    <citation type="journal article" date="2011" name="J. Bacteriol.">
        <title>Comparative genomics of 28 Salmonella enterica isolates: evidence for CRISPR-mediated adaptive sublineage evolution.</title>
        <authorList>
            <person name="Fricke W.F."/>
            <person name="Mammel M.K."/>
            <person name="McDermott P.F."/>
            <person name="Tartera C."/>
            <person name="White D.G."/>
            <person name="Leclerc J.E."/>
            <person name="Ravel J."/>
            <person name="Cebula T.A."/>
        </authorList>
    </citation>
    <scope>NUCLEOTIDE SEQUENCE [LARGE SCALE GENOMIC DNA]</scope>
    <source>
        <strain>SL483</strain>
    </source>
</reference>
<sequence length="539" mass="59647">MRVNNLTPQDLKAYGINDVQDIVYNPSYDTLYQEELNPGLEGYERGVLTNLGAVAVDTGIFTGRSPKDKYIVRDDTTRDTLWWSDKGKGKNDNKPLSQETWQHLKGLVTHQLSGKRLFIVDAFCGANADTRLSVRFITEVAWQAHFVKNMFIRPTDEELVGFKPDFIVMNGAKCTNPQWKEQGLNSENFVAFNLTERIQLIGGTWYGGEMKKGMFSVMNYLLPLKGIASMHCSANVGEKGDVAVFFGLSGTGKTTLSTDPKRRLIGDDEHGWDDDGVFNFEGGCYAKTIKLSKEAEPEIYHAIRRDALLENVTVREDGTVDFDDGSKTENTRVSYPIYHIDNIVKPVSKAGHATKVIFLTADAFGVLPPVSRLTANQTQYHFLSGFTAKLAGTERGVTEPTPTFSACFGAAFLTLHPTQYAEVLVKRMQAAGAQAYLVNTGWNGTGKRISIKDTRAIIDAILNGSLDNAETFRLPLFDLAIPTELPGVDTHILDPRNTYASPEQWQEKATALAKLFIENFEKYTDTPAGEALVSAGPKL</sequence>
<evidence type="ECO:0000255" key="1">
    <source>
        <dbReference type="HAMAP-Rule" id="MF_00453"/>
    </source>
</evidence>
<accession>B5F8L6</accession>
<gene>
    <name evidence="1" type="primary">pckA</name>
    <name type="ordered locus">SeAg_B3701</name>
</gene>
<comment type="function">
    <text evidence="1">Involved in the gluconeogenesis. Catalyzes the conversion of oxaloacetate (OAA) to phosphoenolpyruvate (PEP) through direct phosphoryl transfer between the nucleoside triphosphate and OAA.</text>
</comment>
<comment type="catalytic activity">
    <reaction evidence="1">
        <text>oxaloacetate + ATP = phosphoenolpyruvate + ADP + CO2</text>
        <dbReference type="Rhea" id="RHEA:18617"/>
        <dbReference type="ChEBI" id="CHEBI:16452"/>
        <dbReference type="ChEBI" id="CHEBI:16526"/>
        <dbReference type="ChEBI" id="CHEBI:30616"/>
        <dbReference type="ChEBI" id="CHEBI:58702"/>
        <dbReference type="ChEBI" id="CHEBI:456216"/>
        <dbReference type="EC" id="4.1.1.49"/>
    </reaction>
</comment>
<comment type="cofactor">
    <cofactor evidence="1">
        <name>Mn(2+)</name>
        <dbReference type="ChEBI" id="CHEBI:29035"/>
    </cofactor>
    <text evidence="1">Binds 1 Mn(2+) ion per subunit.</text>
</comment>
<comment type="pathway">
    <text evidence="1">Carbohydrate biosynthesis; gluconeogenesis.</text>
</comment>
<comment type="subunit">
    <text evidence="1">Monomer.</text>
</comment>
<comment type="subcellular location">
    <subcellularLocation>
        <location evidence="1">Cytoplasm</location>
    </subcellularLocation>
</comment>
<comment type="similarity">
    <text evidence="1">Belongs to the phosphoenolpyruvate carboxykinase (ATP) family.</text>
</comment>
<keyword id="KW-0067">ATP-binding</keyword>
<keyword id="KW-0963">Cytoplasm</keyword>
<keyword id="KW-0210">Decarboxylase</keyword>
<keyword id="KW-0312">Gluconeogenesis</keyword>
<keyword id="KW-0456">Lyase</keyword>
<keyword id="KW-0464">Manganese</keyword>
<keyword id="KW-0479">Metal-binding</keyword>
<keyword id="KW-0547">Nucleotide-binding</keyword>